<proteinExistence type="inferred from homology"/>
<evidence type="ECO:0000255" key="1">
    <source>
        <dbReference type="HAMAP-Rule" id="MF_01320"/>
    </source>
</evidence>
<evidence type="ECO:0000256" key="2">
    <source>
        <dbReference type="SAM" id="MobiDB-lite"/>
    </source>
</evidence>
<evidence type="ECO:0000305" key="3"/>
<organism>
    <name type="scientific">Yersinia pestis bv. Antiqua (strain Antiqua)</name>
    <dbReference type="NCBI Taxonomy" id="360102"/>
    <lineage>
        <taxon>Bacteria</taxon>
        <taxon>Pseudomonadati</taxon>
        <taxon>Pseudomonadota</taxon>
        <taxon>Gammaproteobacteria</taxon>
        <taxon>Enterobacterales</taxon>
        <taxon>Yersiniaceae</taxon>
        <taxon>Yersinia</taxon>
    </lineage>
</organism>
<dbReference type="EMBL" id="CP000308">
    <property type="protein sequence ID" value="ABG15222.1"/>
    <property type="molecule type" value="Genomic_DNA"/>
</dbReference>
<dbReference type="RefSeq" id="WP_002213425.1">
    <property type="nucleotide sequence ID" value="NZ_CP009906.1"/>
</dbReference>
<dbReference type="SMR" id="Q1C2V0"/>
<dbReference type="GeneID" id="97454234"/>
<dbReference type="KEGG" id="ypa:YPA_3260"/>
<dbReference type="Proteomes" id="UP000001971">
    <property type="component" value="Chromosome"/>
</dbReference>
<dbReference type="GO" id="GO:0015934">
    <property type="term" value="C:large ribosomal subunit"/>
    <property type="evidence" value="ECO:0007669"/>
    <property type="project" value="InterPro"/>
</dbReference>
<dbReference type="GO" id="GO:0019843">
    <property type="term" value="F:rRNA binding"/>
    <property type="evidence" value="ECO:0007669"/>
    <property type="project" value="UniProtKB-UniRule"/>
</dbReference>
<dbReference type="GO" id="GO:0003735">
    <property type="term" value="F:structural constituent of ribosome"/>
    <property type="evidence" value="ECO:0007669"/>
    <property type="project" value="InterPro"/>
</dbReference>
<dbReference type="GO" id="GO:0016740">
    <property type="term" value="F:transferase activity"/>
    <property type="evidence" value="ECO:0007669"/>
    <property type="project" value="InterPro"/>
</dbReference>
<dbReference type="GO" id="GO:0002181">
    <property type="term" value="P:cytoplasmic translation"/>
    <property type="evidence" value="ECO:0007669"/>
    <property type="project" value="TreeGrafter"/>
</dbReference>
<dbReference type="FunFam" id="2.30.30.30:FF:000001">
    <property type="entry name" value="50S ribosomal protein L2"/>
    <property type="match status" value="1"/>
</dbReference>
<dbReference type="FunFam" id="2.40.50.140:FF:000003">
    <property type="entry name" value="50S ribosomal protein L2"/>
    <property type="match status" value="1"/>
</dbReference>
<dbReference type="FunFam" id="4.10.950.10:FF:000001">
    <property type="entry name" value="50S ribosomal protein L2"/>
    <property type="match status" value="1"/>
</dbReference>
<dbReference type="Gene3D" id="2.30.30.30">
    <property type="match status" value="1"/>
</dbReference>
<dbReference type="Gene3D" id="2.40.50.140">
    <property type="entry name" value="Nucleic acid-binding proteins"/>
    <property type="match status" value="1"/>
</dbReference>
<dbReference type="Gene3D" id="4.10.950.10">
    <property type="entry name" value="Ribosomal protein L2, domain 3"/>
    <property type="match status" value="1"/>
</dbReference>
<dbReference type="HAMAP" id="MF_01320_B">
    <property type="entry name" value="Ribosomal_uL2_B"/>
    <property type="match status" value="1"/>
</dbReference>
<dbReference type="InterPro" id="IPR012340">
    <property type="entry name" value="NA-bd_OB-fold"/>
</dbReference>
<dbReference type="InterPro" id="IPR014722">
    <property type="entry name" value="Rib_uL2_dom2"/>
</dbReference>
<dbReference type="InterPro" id="IPR002171">
    <property type="entry name" value="Ribosomal_uL2"/>
</dbReference>
<dbReference type="InterPro" id="IPR005880">
    <property type="entry name" value="Ribosomal_uL2_bac/org-type"/>
</dbReference>
<dbReference type="InterPro" id="IPR022669">
    <property type="entry name" value="Ribosomal_uL2_C"/>
</dbReference>
<dbReference type="InterPro" id="IPR022671">
    <property type="entry name" value="Ribosomal_uL2_CS"/>
</dbReference>
<dbReference type="InterPro" id="IPR014726">
    <property type="entry name" value="Ribosomal_uL2_dom3"/>
</dbReference>
<dbReference type="InterPro" id="IPR022666">
    <property type="entry name" value="Ribosomal_uL2_RNA-bd_dom"/>
</dbReference>
<dbReference type="InterPro" id="IPR008991">
    <property type="entry name" value="Translation_prot_SH3-like_sf"/>
</dbReference>
<dbReference type="NCBIfam" id="TIGR01171">
    <property type="entry name" value="rplB_bact"/>
    <property type="match status" value="1"/>
</dbReference>
<dbReference type="PANTHER" id="PTHR13691:SF5">
    <property type="entry name" value="LARGE RIBOSOMAL SUBUNIT PROTEIN UL2M"/>
    <property type="match status" value="1"/>
</dbReference>
<dbReference type="PANTHER" id="PTHR13691">
    <property type="entry name" value="RIBOSOMAL PROTEIN L2"/>
    <property type="match status" value="1"/>
</dbReference>
<dbReference type="Pfam" id="PF00181">
    <property type="entry name" value="Ribosomal_L2"/>
    <property type="match status" value="1"/>
</dbReference>
<dbReference type="Pfam" id="PF03947">
    <property type="entry name" value="Ribosomal_L2_C"/>
    <property type="match status" value="1"/>
</dbReference>
<dbReference type="PIRSF" id="PIRSF002158">
    <property type="entry name" value="Ribosomal_L2"/>
    <property type="match status" value="1"/>
</dbReference>
<dbReference type="SMART" id="SM01383">
    <property type="entry name" value="Ribosomal_L2"/>
    <property type="match status" value="1"/>
</dbReference>
<dbReference type="SMART" id="SM01382">
    <property type="entry name" value="Ribosomal_L2_C"/>
    <property type="match status" value="1"/>
</dbReference>
<dbReference type="SUPFAM" id="SSF50249">
    <property type="entry name" value="Nucleic acid-binding proteins"/>
    <property type="match status" value="1"/>
</dbReference>
<dbReference type="SUPFAM" id="SSF50104">
    <property type="entry name" value="Translation proteins SH3-like domain"/>
    <property type="match status" value="1"/>
</dbReference>
<dbReference type="PROSITE" id="PS00467">
    <property type="entry name" value="RIBOSOMAL_L2"/>
    <property type="match status" value="1"/>
</dbReference>
<keyword id="KW-0687">Ribonucleoprotein</keyword>
<keyword id="KW-0689">Ribosomal protein</keyword>
<keyword id="KW-0694">RNA-binding</keyword>
<keyword id="KW-0699">rRNA-binding</keyword>
<accession>Q1C2V0</accession>
<reference key="1">
    <citation type="journal article" date="2006" name="J. Bacteriol.">
        <title>Complete genome sequence of Yersinia pestis strains Antiqua and Nepal516: evidence of gene reduction in an emerging pathogen.</title>
        <authorList>
            <person name="Chain P.S.G."/>
            <person name="Hu P."/>
            <person name="Malfatti S.A."/>
            <person name="Radnedge L."/>
            <person name="Larimer F."/>
            <person name="Vergez L.M."/>
            <person name="Worsham P."/>
            <person name="Chu M.C."/>
            <person name="Andersen G.L."/>
        </authorList>
    </citation>
    <scope>NUCLEOTIDE SEQUENCE [LARGE SCALE GENOMIC DNA]</scope>
    <source>
        <strain>Antiqua</strain>
    </source>
</reference>
<feature type="chain" id="PRO_0000310040" description="Large ribosomal subunit protein uL2">
    <location>
        <begin position="1"/>
        <end position="274"/>
    </location>
</feature>
<feature type="region of interest" description="Disordered" evidence="2">
    <location>
        <begin position="221"/>
        <end position="274"/>
    </location>
</feature>
<sequence>MAIVKCKPTSPGRRHVVKVVNPELHKGKPYAPLLEKLSKSGGRNNNGRITTRHIGGGHKQHYRLVDFKRNKDGIPAVVERLEYDPNRSANIALVLYKDGERRYILAPKGLKAGDQIQSGVDAAIKAGNTLPMRNIPVGSTVHNVEMKPGKGGQLARSAGAYVQIVARDGSYVTLRLRSGEMRKVQADCRATLGEVGNAEHMLRVLGKAGASRWRGIRPTVRGTAMNPVDHPHGGGEGRNFGKHPVTPWGVQTKGKKTRSNKRTDKFIVRRRSKK</sequence>
<protein>
    <recommendedName>
        <fullName evidence="1">Large ribosomal subunit protein uL2</fullName>
    </recommendedName>
    <alternativeName>
        <fullName evidence="3">50S ribosomal protein L2</fullName>
    </alternativeName>
</protein>
<name>RL2_YERPA</name>
<gene>
    <name evidence="1" type="primary">rplB</name>
    <name type="ordered locus">YPA_3260</name>
</gene>
<comment type="function">
    <text evidence="1">One of the primary rRNA binding proteins. Required for association of the 30S and 50S subunits to form the 70S ribosome, for tRNA binding and peptide bond formation. It has been suggested to have peptidyltransferase activity; this is somewhat controversial. Makes several contacts with the 16S rRNA in the 70S ribosome.</text>
</comment>
<comment type="subunit">
    <text evidence="1">Part of the 50S ribosomal subunit. Forms a bridge to the 30S subunit in the 70S ribosome.</text>
</comment>
<comment type="similarity">
    <text evidence="1">Belongs to the universal ribosomal protein uL2 family.</text>
</comment>